<dbReference type="EC" id="6.3.5.-" evidence="1"/>
<dbReference type="EMBL" id="CP000413">
    <property type="protein sequence ID" value="ABJ60866.1"/>
    <property type="molecule type" value="Genomic_DNA"/>
</dbReference>
<dbReference type="RefSeq" id="WP_003646853.1">
    <property type="nucleotide sequence ID" value="NZ_WBMG01000003.1"/>
</dbReference>
<dbReference type="SMR" id="Q041K6"/>
<dbReference type="GeneID" id="29639883"/>
<dbReference type="KEGG" id="lga:LGAS_1511"/>
<dbReference type="HOGENOM" id="CLU_019240_0_0_9"/>
<dbReference type="BioCyc" id="LGAS324831:G1G6Y-1508-MONOMER"/>
<dbReference type="Proteomes" id="UP000000664">
    <property type="component" value="Chromosome"/>
</dbReference>
<dbReference type="GO" id="GO:0050566">
    <property type="term" value="F:asparaginyl-tRNA synthase (glutamine-hydrolyzing) activity"/>
    <property type="evidence" value="ECO:0007669"/>
    <property type="project" value="RHEA"/>
</dbReference>
<dbReference type="GO" id="GO:0005524">
    <property type="term" value="F:ATP binding"/>
    <property type="evidence" value="ECO:0007669"/>
    <property type="project" value="UniProtKB-KW"/>
</dbReference>
<dbReference type="GO" id="GO:0050567">
    <property type="term" value="F:glutaminyl-tRNA synthase (glutamine-hydrolyzing) activity"/>
    <property type="evidence" value="ECO:0007669"/>
    <property type="project" value="UniProtKB-UniRule"/>
</dbReference>
<dbReference type="GO" id="GO:0070681">
    <property type="term" value="P:glutaminyl-tRNAGln biosynthesis via transamidation"/>
    <property type="evidence" value="ECO:0007669"/>
    <property type="project" value="TreeGrafter"/>
</dbReference>
<dbReference type="GO" id="GO:0006412">
    <property type="term" value="P:translation"/>
    <property type="evidence" value="ECO:0007669"/>
    <property type="project" value="UniProtKB-UniRule"/>
</dbReference>
<dbReference type="FunFam" id="1.10.10.410:FF:000001">
    <property type="entry name" value="Aspartyl/glutamyl-tRNA(Asn/Gln) amidotransferase subunit B"/>
    <property type="match status" value="1"/>
</dbReference>
<dbReference type="Gene3D" id="1.10.10.410">
    <property type="match status" value="1"/>
</dbReference>
<dbReference type="Gene3D" id="1.10.150.380">
    <property type="entry name" value="GatB domain, N-terminal subdomain"/>
    <property type="match status" value="1"/>
</dbReference>
<dbReference type="HAMAP" id="MF_00121">
    <property type="entry name" value="GatB"/>
    <property type="match status" value="1"/>
</dbReference>
<dbReference type="InterPro" id="IPR017959">
    <property type="entry name" value="Asn/Gln-tRNA_amidoTrfase_suB/E"/>
</dbReference>
<dbReference type="InterPro" id="IPR006075">
    <property type="entry name" value="Asn/Gln-tRNA_Trfase_suB/E_cat"/>
</dbReference>
<dbReference type="InterPro" id="IPR018027">
    <property type="entry name" value="Asn/Gln_amidotransferase"/>
</dbReference>
<dbReference type="InterPro" id="IPR003789">
    <property type="entry name" value="Asn/Gln_tRNA_amidoTrase-B-like"/>
</dbReference>
<dbReference type="InterPro" id="IPR004413">
    <property type="entry name" value="GatB"/>
</dbReference>
<dbReference type="InterPro" id="IPR042114">
    <property type="entry name" value="GatB_C_1"/>
</dbReference>
<dbReference type="InterPro" id="IPR023168">
    <property type="entry name" value="GatB_Yqey_C_2"/>
</dbReference>
<dbReference type="InterPro" id="IPR017958">
    <property type="entry name" value="Gln-tRNA_amidoTrfase_suB_CS"/>
</dbReference>
<dbReference type="InterPro" id="IPR014746">
    <property type="entry name" value="Gln_synth/guanido_kin_cat_dom"/>
</dbReference>
<dbReference type="NCBIfam" id="TIGR00133">
    <property type="entry name" value="gatB"/>
    <property type="match status" value="1"/>
</dbReference>
<dbReference type="NCBIfam" id="NF004011">
    <property type="entry name" value="PRK05477.1-1"/>
    <property type="match status" value="1"/>
</dbReference>
<dbReference type="NCBIfam" id="NF004012">
    <property type="entry name" value="PRK05477.1-2"/>
    <property type="match status" value="1"/>
</dbReference>
<dbReference type="NCBIfam" id="NF004014">
    <property type="entry name" value="PRK05477.1-4"/>
    <property type="match status" value="1"/>
</dbReference>
<dbReference type="PANTHER" id="PTHR11659">
    <property type="entry name" value="GLUTAMYL-TRNA GLN AMIDOTRANSFERASE SUBUNIT B MITOCHONDRIAL AND PROKARYOTIC PET112-RELATED"/>
    <property type="match status" value="1"/>
</dbReference>
<dbReference type="PANTHER" id="PTHR11659:SF0">
    <property type="entry name" value="GLUTAMYL-TRNA(GLN) AMIDOTRANSFERASE SUBUNIT B, MITOCHONDRIAL"/>
    <property type="match status" value="1"/>
</dbReference>
<dbReference type="Pfam" id="PF02934">
    <property type="entry name" value="GatB_N"/>
    <property type="match status" value="1"/>
</dbReference>
<dbReference type="Pfam" id="PF02637">
    <property type="entry name" value="GatB_Yqey"/>
    <property type="match status" value="1"/>
</dbReference>
<dbReference type="SMART" id="SM00845">
    <property type="entry name" value="GatB_Yqey"/>
    <property type="match status" value="1"/>
</dbReference>
<dbReference type="SUPFAM" id="SSF89095">
    <property type="entry name" value="GatB/YqeY motif"/>
    <property type="match status" value="1"/>
</dbReference>
<dbReference type="SUPFAM" id="SSF55931">
    <property type="entry name" value="Glutamine synthetase/guanido kinase"/>
    <property type="match status" value="1"/>
</dbReference>
<dbReference type="PROSITE" id="PS01234">
    <property type="entry name" value="GATB"/>
    <property type="match status" value="1"/>
</dbReference>
<feature type="chain" id="PRO_1000015980" description="Aspartyl/glutamyl-tRNA(Asn/Gln) amidotransferase subunit B">
    <location>
        <begin position="1"/>
        <end position="476"/>
    </location>
</feature>
<accession>Q041K6</accession>
<organism>
    <name type="scientific">Lactobacillus gasseri (strain ATCC 33323 / DSM 20243 / BCRC 14619 / CIP 102991 / JCM 1131 / KCTC 3163 / NCIMB 11718 / NCTC 13722 / AM63)</name>
    <dbReference type="NCBI Taxonomy" id="324831"/>
    <lineage>
        <taxon>Bacteria</taxon>
        <taxon>Bacillati</taxon>
        <taxon>Bacillota</taxon>
        <taxon>Bacilli</taxon>
        <taxon>Lactobacillales</taxon>
        <taxon>Lactobacillaceae</taxon>
        <taxon>Lactobacillus</taxon>
    </lineage>
</organism>
<sequence>MNFKSTIGLEVHFELKTKSKIFSPSPVTYGAEANTETNVIDWAMPGVLPRLNKDVYRLGIMVALATHSHILPVTHFDRKNYFYPDNPKAYQITQFFQPLARDGYIEVEVRGKKKRIGIHEMHIEEDAGKNTHGANGYSYVDLNRQGVPLLEVVSEPDMEDPEEAYAYLTKLRQIVQFTGASDVKMEEGSMRVDTNISIRPAGQEKLGTKVEMKNLNSFDHVRRSLAYEEKRQQQVLLSGGRVQLSTRRFDEATGKTVLERVKEGDADYRYFPEPDIAPYHIKQSWIDEIAESLPESPFERRKRYVKEYGIKEYDADVILQTKESSDFYDAAVAAGADPTLAANWLNTQVNGYLNENQVGIADIKLTPEHLAEMIKMIKDGTISSKIAKKVFKESIENGTDPKKYVEDKGMVQLSDVSVLGPMVTKVVDDNPQSVEDFKNGKDRAIGFLVGQIMKQTRGKANPKVVNQLLNKELQSR</sequence>
<comment type="function">
    <text evidence="1">Allows the formation of correctly charged Asn-tRNA(Asn) or Gln-tRNA(Gln) through the transamidation of misacylated Asp-tRNA(Asn) or Glu-tRNA(Gln) in organisms which lack either or both of asparaginyl-tRNA or glutaminyl-tRNA synthetases. The reaction takes place in the presence of glutamine and ATP through an activated phospho-Asp-tRNA(Asn) or phospho-Glu-tRNA(Gln).</text>
</comment>
<comment type="catalytic activity">
    <reaction evidence="1">
        <text>L-glutamyl-tRNA(Gln) + L-glutamine + ATP + H2O = L-glutaminyl-tRNA(Gln) + L-glutamate + ADP + phosphate + H(+)</text>
        <dbReference type="Rhea" id="RHEA:17521"/>
        <dbReference type="Rhea" id="RHEA-COMP:9681"/>
        <dbReference type="Rhea" id="RHEA-COMP:9684"/>
        <dbReference type="ChEBI" id="CHEBI:15377"/>
        <dbReference type="ChEBI" id="CHEBI:15378"/>
        <dbReference type="ChEBI" id="CHEBI:29985"/>
        <dbReference type="ChEBI" id="CHEBI:30616"/>
        <dbReference type="ChEBI" id="CHEBI:43474"/>
        <dbReference type="ChEBI" id="CHEBI:58359"/>
        <dbReference type="ChEBI" id="CHEBI:78520"/>
        <dbReference type="ChEBI" id="CHEBI:78521"/>
        <dbReference type="ChEBI" id="CHEBI:456216"/>
    </reaction>
</comment>
<comment type="catalytic activity">
    <reaction evidence="1">
        <text>L-aspartyl-tRNA(Asn) + L-glutamine + ATP + H2O = L-asparaginyl-tRNA(Asn) + L-glutamate + ADP + phosphate + 2 H(+)</text>
        <dbReference type="Rhea" id="RHEA:14513"/>
        <dbReference type="Rhea" id="RHEA-COMP:9674"/>
        <dbReference type="Rhea" id="RHEA-COMP:9677"/>
        <dbReference type="ChEBI" id="CHEBI:15377"/>
        <dbReference type="ChEBI" id="CHEBI:15378"/>
        <dbReference type="ChEBI" id="CHEBI:29985"/>
        <dbReference type="ChEBI" id="CHEBI:30616"/>
        <dbReference type="ChEBI" id="CHEBI:43474"/>
        <dbReference type="ChEBI" id="CHEBI:58359"/>
        <dbReference type="ChEBI" id="CHEBI:78515"/>
        <dbReference type="ChEBI" id="CHEBI:78516"/>
        <dbReference type="ChEBI" id="CHEBI:456216"/>
    </reaction>
</comment>
<comment type="subunit">
    <text evidence="1">Heterotrimer of A, B and C subunits.</text>
</comment>
<comment type="similarity">
    <text evidence="1">Belongs to the GatB/GatE family. GatB subfamily.</text>
</comment>
<proteinExistence type="inferred from homology"/>
<keyword id="KW-0067">ATP-binding</keyword>
<keyword id="KW-0436">Ligase</keyword>
<keyword id="KW-0547">Nucleotide-binding</keyword>
<keyword id="KW-0648">Protein biosynthesis</keyword>
<protein>
    <recommendedName>
        <fullName evidence="1">Aspartyl/glutamyl-tRNA(Asn/Gln) amidotransferase subunit B</fullName>
        <shortName evidence="1">Asp/Glu-ADT subunit B</shortName>
        <ecNumber evidence="1">6.3.5.-</ecNumber>
    </recommendedName>
</protein>
<name>GATB_LACGA</name>
<gene>
    <name evidence="1" type="primary">gatB</name>
    <name type="ordered locus">LGAS_1511</name>
</gene>
<evidence type="ECO:0000255" key="1">
    <source>
        <dbReference type="HAMAP-Rule" id="MF_00121"/>
    </source>
</evidence>
<reference key="1">
    <citation type="journal article" date="2006" name="Proc. Natl. Acad. Sci. U.S.A.">
        <title>Comparative genomics of the lactic acid bacteria.</title>
        <authorList>
            <person name="Makarova K.S."/>
            <person name="Slesarev A."/>
            <person name="Wolf Y.I."/>
            <person name="Sorokin A."/>
            <person name="Mirkin B."/>
            <person name="Koonin E.V."/>
            <person name="Pavlov A."/>
            <person name="Pavlova N."/>
            <person name="Karamychev V."/>
            <person name="Polouchine N."/>
            <person name="Shakhova V."/>
            <person name="Grigoriev I."/>
            <person name="Lou Y."/>
            <person name="Rohksar D."/>
            <person name="Lucas S."/>
            <person name="Huang K."/>
            <person name="Goodstein D.M."/>
            <person name="Hawkins T."/>
            <person name="Plengvidhya V."/>
            <person name="Welker D."/>
            <person name="Hughes J."/>
            <person name="Goh Y."/>
            <person name="Benson A."/>
            <person name="Baldwin K."/>
            <person name="Lee J.-H."/>
            <person name="Diaz-Muniz I."/>
            <person name="Dosti B."/>
            <person name="Smeianov V."/>
            <person name="Wechter W."/>
            <person name="Barabote R."/>
            <person name="Lorca G."/>
            <person name="Altermann E."/>
            <person name="Barrangou R."/>
            <person name="Ganesan B."/>
            <person name="Xie Y."/>
            <person name="Rawsthorne H."/>
            <person name="Tamir D."/>
            <person name="Parker C."/>
            <person name="Breidt F."/>
            <person name="Broadbent J.R."/>
            <person name="Hutkins R."/>
            <person name="O'Sullivan D."/>
            <person name="Steele J."/>
            <person name="Unlu G."/>
            <person name="Saier M.H. Jr."/>
            <person name="Klaenhammer T."/>
            <person name="Richardson P."/>
            <person name="Kozyavkin S."/>
            <person name="Weimer B.C."/>
            <person name="Mills D.A."/>
        </authorList>
    </citation>
    <scope>NUCLEOTIDE SEQUENCE [LARGE SCALE GENOMIC DNA]</scope>
    <source>
        <strain>ATCC 33323 / DSM 20243 / BCRC 14619 / CIP 102991 / JCM 1131 / KCTC 3163 / NCIMB 11718 / NCTC 13722 / AM63</strain>
    </source>
</reference>